<sequence length="238" mass="26437">MTLPEFFGCTFIAFGPPFALFVFTIANDPVRIIILIAAAFFWLLSLLISSLWYALIPLKEFLAFGVVFSVCFQEAFRYIIYRILRSTEQGLHAVAEDTRVTDNKHILAYVSGLGFGIISGMFALVNVLADMSGPGTMGLKGGTELFFVTSAAQALSIILLHTFWSVIFFNAFDTNNYIHIGYVVFSHLFVSLITLLNANELYTTTLLINYLVTILTGVLAFRVAGGTSRSFRKFITCQ</sequence>
<dbReference type="EMBL" id="AF508786">
    <property type="protein sequence ID" value="AAN63815.1"/>
    <property type="molecule type" value="mRNA"/>
</dbReference>
<dbReference type="EMBL" id="AE014134">
    <property type="protein sequence ID" value="AAF51212.1"/>
    <property type="molecule type" value="Genomic_DNA"/>
</dbReference>
<dbReference type="EMBL" id="AY051658">
    <property type="protein sequence ID" value="AAK93082.1"/>
    <property type="molecule type" value="mRNA"/>
</dbReference>
<dbReference type="RefSeq" id="NP_001259963.1">
    <property type="nucleotide sequence ID" value="NM_001273034.1"/>
</dbReference>
<dbReference type="RefSeq" id="NP_608710.1">
    <property type="nucleotide sequence ID" value="NM_134866.3"/>
</dbReference>
<dbReference type="SMR" id="Q9VQG2"/>
<dbReference type="BioGRID" id="59690">
    <property type="interactions" value="20"/>
</dbReference>
<dbReference type="ComplexPortal" id="CPX-2673">
    <property type="entry name" value="Gamma-secretase complex"/>
</dbReference>
<dbReference type="FunCoup" id="Q9VQG2">
    <property type="interactions" value="841"/>
</dbReference>
<dbReference type="IntAct" id="Q9VQG2">
    <property type="interactions" value="10"/>
</dbReference>
<dbReference type="STRING" id="7227.FBpp0307126"/>
<dbReference type="PaxDb" id="7227-FBpp0077400"/>
<dbReference type="DNASU" id="33467"/>
<dbReference type="EnsemblMetazoa" id="FBtr0077716">
    <property type="protein sequence ID" value="FBpp0077400"/>
    <property type="gene ID" value="FBgn0031458"/>
</dbReference>
<dbReference type="EnsemblMetazoa" id="FBtr0335127">
    <property type="protein sequence ID" value="FBpp0307126"/>
    <property type="gene ID" value="FBgn0031458"/>
</dbReference>
<dbReference type="GeneID" id="33467"/>
<dbReference type="KEGG" id="dme:Dmel_CG2855"/>
<dbReference type="AGR" id="FB:FBgn0031458"/>
<dbReference type="CTD" id="33467"/>
<dbReference type="FlyBase" id="FBgn0031458">
    <property type="gene designation" value="aph-1"/>
</dbReference>
<dbReference type="VEuPathDB" id="VectorBase:FBgn0031458"/>
<dbReference type="eggNOG" id="KOG3972">
    <property type="taxonomic scope" value="Eukaryota"/>
</dbReference>
<dbReference type="GeneTree" id="ENSGT00390000002049"/>
<dbReference type="HOGENOM" id="CLU_086389_0_0_1"/>
<dbReference type="InParanoid" id="Q9VQG2"/>
<dbReference type="OMA" id="DTNNYLH"/>
<dbReference type="OrthoDB" id="6507463at2759"/>
<dbReference type="PhylomeDB" id="Q9VQG2"/>
<dbReference type="Reactome" id="R-DME-1251985">
    <property type="pathway name" value="Nuclear signaling by ERBB4"/>
</dbReference>
<dbReference type="Reactome" id="R-DME-3928665">
    <property type="pathway name" value="EPH-ephrin mediated repulsion of cells"/>
</dbReference>
<dbReference type="SignaLink" id="Q9VQG2"/>
<dbReference type="BioGRID-ORCS" id="33467">
    <property type="hits" value="0 hits in 3 CRISPR screens"/>
</dbReference>
<dbReference type="ChiTaRS" id="Alp1">
    <property type="organism name" value="fly"/>
</dbReference>
<dbReference type="GenomeRNAi" id="33467"/>
<dbReference type="PRO" id="PR:Q9VQG2"/>
<dbReference type="Proteomes" id="UP000000803">
    <property type="component" value="Chromosome 2L"/>
</dbReference>
<dbReference type="Bgee" id="FBgn0031458">
    <property type="expression patterns" value="Expressed in saliva-secreting gland and 116 other cell types or tissues"/>
</dbReference>
<dbReference type="ExpressionAtlas" id="Q9VQG2">
    <property type="expression patterns" value="baseline and differential"/>
</dbReference>
<dbReference type="GO" id="GO:0005783">
    <property type="term" value="C:endoplasmic reticulum"/>
    <property type="evidence" value="ECO:0000318"/>
    <property type="project" value="GO_Central"/>
</dbReference>
<dbReference type="GO" id="GO:0070765">
    <property type="term" value="C:gamma-secretase complex"/>
    <property type="evidence" value="ECO:0000314"/>
    <property type="project" value="UniProtKB"/>
</dbReference>
<dbReference type="GO" id="GO:0005770">
    <property type="term" value="C:late endosome"/>
    <property type="evidence" value="ECO:0000314"/>
    <property type="project" value="FlyBase"/>
</dbReference>
<dbReference type="GO" id="GO:0005886">
    <property type="term" value="C:plasma membrane"/>
    <property type="evidence" value="ECO:0000303"/>
    <property type="project" value="UniProtKB"/>
</dbReference>
<dbReference type="GO" id="GO:0055037">
    <property type="term" value="C:recycling endosome"/>
    <property type="evidence" value="ECO:0000314"/>
    <property type="project" value="FlyBase"/>
</dbReference>
<dbReference type="GO" id="GO:0030674">
    <property type="term" value="F:protein-macromolecule adaptor activity"/>
    <property type="evidence" value="ECO:0000318"/>
    <property type="project" value="GO_Central"/>
</dbReference>
<dbReference type="GO" id="GO:0034205">
    <property type="term" value="P:amyloid-beta formation"/>
    <property type="evidence" value="ECO:0000314"/>
    <property type="project" value="FlyBase"/>
</dbReference>
<dbReference type="GO" id="GO:0006509">
    <property type="term" value="P:membrane protein ectodomain proteolysis"/>
    <property type="evidence" value="ECO:0000314"/>
    <property type="project" value="FlyBase"/>
</dbReference>
<dbReference type="GO" id="GO:0007220">
    <property type="term" value="P:Notch receptor processing"/>
    <property type="evidence" value="ECO:0000318"/>
    <property type="project" value="GO_Central"/>
</dbReference>
<dbReference type="GO" id="GO:0035333">
    <property type="term" value="P:Notch receptor processing, ligand-dependent"/>
    <property type="evidence" value="ECO:0000316"/>
    <property type="project" value="FlyBase"/>
</dbReference>
<dbReference type="GO" id="GO:0007219">
    <property type="term" value="P:Notch signaling pathway"/>
    <property type="evidence" value="ECO:0000315"/>
    <property type="project" value="UniProtKB"/>
</dbReference>
<dbReference type="GO" id="GO:0016485">
    <property type="term" value="P:protein processing"/>
    <property type="evidence" value="ECO:0000318"/>
    <property type="project" value="GO_Central"/>
</dbReference>
<dbReference type="GO" id="GO:0050821">
    <property type="term" value="P:protein stabilization"/>
    <property type="evidence" value="ECO:0000315"/>
    <property type="project" value="UniProtKB"/>
</dbReference>
<dbReference type="InterPro" id="IPR009294">
    <property type="entry name" value="Aph-1"/>
</dbReference>
<dbReference type="PANTHER" id="PTHR12889">
    <property type="entry name" value="GAMMA-SECRETASE SUBUNIT APH-1"/>
    <property type="match status" value="1"/>
</dbReference>
<dbReference type="Pfam" id="PF06105">
    <property type="entry name" value="Aph-1"/>
    <property type="match status" value="1"/>
</dbReference>
<protein>
    <recommendedName>
        <fullName>Gamma-secretase subunit Aph-1</fullName>
    </recommendedName>
    <alternativeName>
        <fullName>Presenilin-stabilization factor</fullName>
    </alternativeName>
</protein>
<keyword id="KW-0472">Membrane</keyword>
<keyword id="KW-0914">Notch signaling pathway</keyword>
<keyword id="KW-1185">Reference proteome</keyword>
<keyword id="KW-0812">Transmembrane</keyword>
<keyword id="KW-1133">Transmembrane helix</keyword>
<reference key="1">
    <citation type="submission" date="2002-05" db="EMBL/GenBank/DDBJ databases">
        <title>PSF is essential for gamma-secretase activity and stabilization of presenilin and nicastrin.</title>
        <authorList>
            <person name="Lee H.-J."/>
            <person name="Kim T.-W."/>
        </authorList>
    </citation>
    <scope>NUCLEOTIDE SEQUENCE [MRNA]</scope>
</reference>
<reference key="2">
    <citation type="journal article" date="2000" name="Science">
        <title>The genome sequence of Drosophila melanogaster.</title>
        <authorList>
            <person name="Adams M.D."/>
            <person name="Celniker S.E."/>
            <person name="Holt R.A."/>
            <person name="Evans C.A."/>
            <person name="Gocayne J.D."/>
            <person name="Amanatides P.G."/>
            <person name="Scherer S.E."/>
            <person name="Li P.W."/>
            <person name="Hoskins R.A."/>
            <person name="Galle R.F."/>
            <person name="George R.A."/>
            <person name="Lewis S.E."/>
            <person name="Richards S."/>
            <person name="Ashburner M."/>
            <person name="Henderson S.N."/>
            <person name="Sutton G.G."/>
            <person name="Wortman J.R."/>
            <person name="Yandell M.D."/>
            <person name="Zhang Q."/>
            <person name="Chen L.X."/>
            <person name="Brandon R.C."/>
            <person name="Rogers Y.-H.C."/>
            <person name="Blazej R.G."/>
            <person name="Champe M."/>
            <person name="Pfeiffer B.D."/>
            <person name="Wan K.H."/>
            <person name="Doyle C."/>
            <person name="Baxter E.G."/>
            <person name="Helt G."/>
            <person name="Nelson C.R."/>
            <person name="Miklos G.L.G."/>
            <person name="Abril J.F."/>
            <person name="Agbayani A."/>
            <person name="An H.-J."/>
            <person name="Andrews-Pfannkoch C."/>
            <person name="Baldwin D."/>
            <person name="Ballew R.M."/>
            <person name="Basu A."/>
            <person name="Baxendale J."/>
            <person name="Bayraktaroglu L."/>
            <person name="Beasley E.M."/>
            <person name="Beeson K.Y."/>
            <person name="Benos P.V."/>
            <person name="Berman B.P."/>
            <person name="Bhandari D."/>
            <person name="Bolshakov S."/>
            <person name="Borkova D."/>
            <person name="Botchan M.R."/>
            <person name="Bouck J."/>
            <person name="Brokstein P."/>
            <person name="Brottier P."/>
            <person name="Burtis K.C."/>
            <person name="Busam D.A."/>
            <person name="Butler H."/>
            <person name="Cadieu E."/>
            <person name="Center A."/>
            <person name="Chandra I."/>
            <person name="Cherry J.M."/>
            <person name="Cawley S."/>
            <person name="Dahlke C."/>
            <person name="Davenport L.B."/>
            <person name="Davies P."/>
            <person name="de Pablos B."/>
            <person name="Delcher A."/>
            <person name="Deng Z."/>
            <person name="Mays A.D."/>
            <person name="Dew I."/>
            <person name="Dietz S.M."/>
            <person name="Dodson K."/>
            <person name="Doup L.E."/>
            <person name="Downes M."/>
            <person name="Dugan-Rocha S."/>
            <person name="Dunkov B.C."/>
            <person name="Dunn P."/>
            <person name="Durbin K.J."/>
            <person name="Evangelista C.C."/>
            <person name="Ferraz C."/>
            <person name="Ferriera S."/>
            <person name="Fleischmann W."/>
            <person name="Fosler C."/>
            <person name="Gabrielian A.E."/>
            <person name="Garg N.S."/>
            <person name="Gelbart W.M."/>
            <person name="Glasser K."/>
            <person name="Glodek A."/>
            <person name="Gong F."/>
            <person name="Gorrell J.H."/>
            <person name="Gu Z."/>
            <person name="Guan P."/>
            <person name="Harris M."/>
            <person name="Harris N.L."/>
            <person name="Harvey D.A."/>
            <person name="Heiman T.J."/>
            <person name="Hernandez J.R."/>
            <person name="Houck J."/>
            <person name="Hostin D."/>
            <person name="Houston K.A."/>
            <person name="Howland T.J."/>
            <person name="Wei M.-H."/>
            <person name="Ibegwam C."/>
            <person name="Jalali M."/>
            <person name="Kalush F."/>
            <person name="Karpen G.H."/>
            <person name="Ke Z."/>
            <person name="Kennison J.A."/>
            <person name="Ketchum K.A."/>
            <person name="Kimmel B.E."/>
            <person name="Kodira C.D."/>
            <person name="Kraft C.L."/>
            <person name="Kravitz S."/>
            <person name="Kulp D."/>
            <person name="Lai Z."/>
            <person name="Lasko P."/>
            <person name="Lei Y."/>
            <person name="Levitsky A.A."/>
            <person name="Li J.H."/>
            <person name="Li Z."/>
            <person name="Liang Y."/>
            <person name="Lin X."/>
            <person name="Liu X."/>
            <person name="Mattei B."/>
            <person name="McIntosh T.C."/>
            <person name="McLeod M.P."/>
            <person name="McPherson D."/>
            <person name="Merkulov G."/>
            <person name="Milshina N.V."/>
            <person name="Mobarry C."/>
            <person name="Morris J."/>
            <person name="Moshrefi A."/>
            <person name="Mount S.M."/>
            <person name="Moy M."/>
            <person name="Murphy B."/>
            <person name="Murphy L."/>
            <person name="Muzny D.M."/>
            <person name="Nelson D.L."/>
            <person name="Nelson D.R."/>
            <person name="Nelson K.A."/>
            <person name="Nixon K."/>
            <person name="Nusskern D.R."/>
            <person name="Pacleb J.M."/>
            <person name="Palazzolo M."/>
            <person name="Pittman G.S."/>
            <person name="Pan S."/>
            <person name="Pollard J."/>
            <person name="Puri V."/>
            <person name="Reese M.G."/>
            <person name="Reinert K."/>
            <person name="Remington K."/>
            <person name="Saunders R.D.C."/>
            <person name="Scheeler F."/>
            <person name="Shen H."/>
            <person name="Shue B.C."/>
            <person name="Siden-Kiamos I."/>
            <person name="Simpson M."/>
            <person name="Skupski M.P."/>
            <person name="Smith T.J."/>
            <person name="Spier E."/>
            <person name="Spradling A.C."/>
            <person name="Stapleton M."/>
            <person name="Strong R."/>
            <person name="Sun E."/>
            <person name="Svirskas R."/>
            <person name="Tector C."/>
            <person name="Turner R."/>
            <person name="Venter E."/>
            <person name="Wang A.H."/>
            <person name="Wang X."/>
            <person name="Wang Z.-Y."/>
            <person name="Wassarman D.A."/>
            <person name="Weinstock G.M."/>
            <person name="Weissenbach J."/>
            <person name="Williams S.M."/>
            <person name="Woodage T."/>
            <person name="Worley K.C."/>
            <person name="Wu D."/>
            <person name="Yang S."/>
            <person name="Yao Q.A."/>
            <person name="Ye J."/>
            <person name="Yeh R.-F."/>
            <person name="Zaveri J.S."/>
            <person name="Zhan M."/>
            <person name="Zhang G."/>
            <person name="Zhao Q."/>
            <person name="Zheng L."/>
            <person name="Zheng X.H."/>
            <person name="Zhong F.N."/>
            <person name="Zhong W."/>
            <person name="Zhou X."/>
            <person name="Zhu S.C."/>
            <person name="Zhu X."/>
            <person name="Smith H.O."/>
            <person name="Gibbs R.A."/>
            <person name="Myers E.W."/>
            <person name="Rubin G.M."/>
            <person name="Venter J.C."/>
        </authorList>
    </citation>
    <scope>NUCLEOTIDE SEQUENCE [LARGE SCALE GENOMIC DNA]</scope>
    <source>
        <strain>Berkeley</strain>
    </source>
</reference>
<reference key="3">
    <citation type="journal article" date="2002" name="Genome Biol.">
        <title>Annotation of the Drosophila melanogaster euchromatic genome: a systematic review.</title>
        <authorList>
            <person name="Misra S."/>
            <person name="Crosby M.A."/>
            <person name="Mungall C.J."/>
            <person name="Matthews B.B."/>
            <person name="Campbell K.S."/>
            <person name="Hradecky P."/>
            <person name="Huang Y."/>
            <person name="Kaminker J.S."/>
            <person name="Millburn G.H."/>
            <person name="Prochnik S.E."/>
            <person name="Smith C.D."/>
            <person name="Tupy J.L."/>
            <person name="Whitfield E.J."/>
            <person name="Bayraktaroglu L."/>
            <person name="Berman B.P."/>
            <person name="Bettencourt B.R."/>
            <person name="Celniker S.E."/>
            <person name="de Grey A.D.N.J."/>
            <person name="Drysdale R.A."/>
            <person name="Harris N.L."/>
            <person name="Richter J."/>
            <person name="Russo S."/>
            <person name="Schroeder A.J."/>
            <person name="Shu S.Q."/>
            <person name="Stapleton M."/>
            <person name="Yamada C."/>
            <person name="Ashburner M."/>
            <person name="Gelbart W.M."/>
            <person name="Rubin G.M."/>
            <person name="Lewis S.E."/>
        </authorList>
    </citation>
    <scope>GENOME REANNOTATION</scope>
    <source>
        <strain>Berkeley</strain>
    </source>
</reference>
<reference key="4">
    <citation type="journal article" date="2002" name="Genome Biol.">
        <title>A Drosophila full-length cDNA resource.</title>
        <authorList>
            <person name="Stapleton M."/>
            <person name="Carlson J.W."/>
            <person name="Brokstein P."/>
            <person name="Yu C."/>
            <person name="Champe M."/>
            <person name="George R.A."/>
            <person name="Guarin H."/>
            <person name="Kronmiller B."/>
            <person name="Pacleb J.M."/>
            <person name="Park S."/>
            <person name="Wan K.H."/>
            <person name="Rubin G.M."/>
            <person name="Celniker S.E."/>
        </authorList>
    </citation>
    <scope>NUCLEOTIDE SEQUENCE [LARGE SCALE MRNA]</scope>
    <source>
        <strain>Berkeley</strain>
        <tissue>Embryo</tissue>
    </source>
</reference>
<reference key="5">
    <citation type="journal article" date="2002" name="Dev. Cell">
        <title>aph-1 and pen-2 are required for Notch pathway signaling, gamma-secretase cleavage of betaAPP, and presenilin protein accumulation.</title>
        <authorList>
            <person name="Francis R."/>
            <person name="McGrath G."/>
            <person name="Zhang J."/>
            <person name="Ruddy D.A."/>
            <person name="Sym M."/>
            <person name="Apfeld J."/>
            <person name="Nicoll M."/>
            <person name="Maxwell M."/>
            <person name="Hai B."/>
            <person name="Ellis M.C."/>
            <person name="Parks A.L."/>
            <person name="Xu W."/>
            <person name="Li J."/>
            <person name="Gurney M."/>
            <person name="Myers R.L."/>
            <person name="Himes C.S."/>
            <person name="Hiebsch R."/>
            <person name="Ruble C."/>
            <person name="Nye J.S."/>
            <person name="Curtis D."/>
        </authorList>
    </citation>
    <scope>FUNCTION</scope>
</reference>
<reference key="6">
    <citation type="journal article" date="2003" name="Nature">
        <title>The role of presenilin cofactors in the gamma-secretase complex.</title>
        <authorList>
            <person name="Takasugi N."/>
            <person name="Tomita T."/>
            <person name="Hayashi I."/>
            <person name="Tsuruoka M."/>
            <person name="Niimura M."/>
            <person name="Takahashi Y."/>
            <person name="Thinakaran G."/>
            <person name="Iwatsubo T."/>
        </authorList>
    </citation>
    <scope>FUNCTION IN THE GAMMA-SECRETASE COMPLEX</scope>
    <scope>INTERACTION WITH PEN-2; PSN AND NCT</scope>
</reference>
<feature type="chain" id="PRO_0000221058" description="Gamma-secretase subunit Aph-1">
    <location>
        <begin position="1"/>
        <end position="238"/>
    </location>
</feature>
<feature type="transmembrane region" description="Helical; Name=1" evidence="1">
    <location>
        <begin position="6"/>
        <end position="26"/>
    </location>
</feature>
<feature type="transmembrane region" description="Helical; Name=2" evidence="1">
    <location>
        <begin position="32"/>
        <end position="52"/>
    </location>
</feature>
<feature type="transmembrane region" description="Helical; Name=3" evidence="1">
    <location>
        <begin position="53"/>
        <end position="73"/>
    </location>
</feature>
<feature type="transmembrane region" description="Helical; Name=4" evidence="1">
    <location>
        <begin position="105"/>
        <end position="125"/>
    </location>
</feature>
<feature type="transmembrane region" description="Helical; Name=5" evidence="1">
    <location>
        <begin position="152"/>
        <end position="172"/>
    </location>
</feature>
<feature type="transmembrane region" description="Helical; Name=6" evidence="1">
    <location>
        <begin position="178"/>
        <end position="198"/>
    </location>
</feature>
<feature type="transmembrane region" description="Helical; Name=7" evidence="1">
    <location>
        <begin position="201"/>
        <end position="221"/>
    </location>
</feature>
<proteinExistence type="evidence at protein level"/>
<accession>Q9VQG2</accession>
<name>APH1_DROME</name>
<gene>
    <name type="primary">aph-1</name>
    <name type="synonym">PSF</name>
    <name type="ORF">CG2855</name>
</gene>
<comment type="function">
    <text evidence="2 3">Essential subunit of the gamma-secretase complex, an endoprotease complex that catalyzes the intramembrane cleavage of integral membrane proteins such as Notch. It probably represents a stabilizing cofactor for the presenilin homodimer that promotes the formation of a stable complex.</text>
</comment>
<comment type="subunit">
    <text>Component of the gamma-secretase complex, a complex composed of a presenilin (Psn) homodimer, nicastrin (Nct), Aph-1 and Pen-2.</text>
</comment>
<comment type="subcellular location">
    <subcellularLocation>
        <location evidence="4">Membrane</location>
        <topology evidence="4">Multi-pass membrane protein</topology>
    </subcellularLocation>
</comment>
<comment type="similarity">
    <text evidence="4">Belongs to the APH-1 family.</text>
</comment>
<evidence type="ECO:0000255" key="1"/>
<evidence type="ECO:0000269" key="2">
    <source>
    </source>
</evidence>
<evidence type="ECO:0000269" key="3">
    <source>
    </source>
</evidence>
<evidence type="ECO:0000305" key="4"/>
<organism>
    <name type="scientific">Drosophila melanogaster</name>
    <name type="common">Fruit fly</name>
    <dbReference type="NCBI Taxonomy" id="7227"/>
    <lineage>
        <taxon>Eukaryota</taxon>
        <taxon>Metazoa</taxon>
        <taxon>Ecdysozoa</taxon>
        <taxon>Arthropoda</taxon>
        <taxon>Hexapoda</taxon>
        <taxon>Insecta</taxon>
        <taxon>Pterygota</taxon>
        <taxon>Neoptera</taxon>
        <taxon>Endopterygota</taxon>
        <taxon>Diptera</taxon>
        <taxon>Brachycera</taxon>
        <taxon>Muscomorpha</taxon>
        <taxon>Ephydroidea</taxon>
        <taxon>Drosophilidae</taxon>
        <taxon>Drosophila</taxon>
        <taxon>Sophophora</taxon>
    </lineage>
</organism>